<comment type="catalytic activity">
    <reaction>
        <text>an NDP-alpha-D-glucose + [(1-&gt;4)-alpha-D-glucosyl](n) = [(1-&gt;4)-alpha-D-glucosyl](n+1) + a ribonucleoside 5'-diphosphate + H(+)</text>
        <dbReference type="Rhea" id="RHEA:15873"/>
        <dbReference type="Rhea" id="RHEA-COMP:9584"/>
        <dbReference type="Rhea" id="RHEA-COMP:9587"/>
        <dbReference type="ChEBI" id="CHEBI:15378"/>
        <dbReference type="ChEBI" id="CHEBI:15444"/>
        <dbReference type="ChEBI" id="CHEBI:57930"/>
        <dbReference type="ChEBI" id="CHEBI:76533"/>
        <dbReference type="EC" id="2.4.1.242"/>
    </reaction>
</comment>
<comment type="pathway">
    <text>Glycan biosynthesis; starch biosynthesis.</text>
</comment>
<comment type="subcellular location">
    <subcellularLocation>
        <location>Plastid</location>
        <location>Chloroplast</location>
    </subcellularLocation>
    <subcellularLocation>
        <location>Plastid</location>
        <location>Amyloplast</location>
    </subcellularLocation>
    <text>Amyloplast or chloroplast, granule-bound.</text>
</comment>
<comment type="similarity">
    <text evidence="3">Belongs to the glycosyltransferase 1 family. Bacterial/plant glycogen synthase subfamily.</text>
</comment>
<keyword id="KW-0035">Amyloplast</keyword>
<keyword id="KW-0150">Chloroplast</keyword>
<keyword id="KW-0903">Direct protein sequencing</keyword>
<keyword id="KW-0328">Glycosyltransferase</keyword>
<keyword id="KW-0934">Plastid</keyword>
<keyword id="KW-1185">Reference proteome</keyword>
<keyword id="KW-0750">Starch biosynthesis</keyword>
<keyword id="KW-0808">Transferase</keyword>
<keyword id="KW-0809">Transit peptide</keyword>
<feature type="transit peptide" description="Chloroplast">
    <location>
        <begin position="1"/>
        <end position="77"/>
    </location>
</feature>
<feature type="chain" id="PRO_0000011134" description="Granule-bound starch synthase 1, chloroplastic/amyloplastic">
    <location>
        <begin position="78"/>
        <end position="607"/>
    </location>
</feature>
<feature type="region of interest" description="Disordered" evidence="2">
    <location>
        <begin position="585"/>
        <end position="607"/>
    </location>
</feature>
<feature type="binding site" evidence="1">
    <location>
        <position position="95"/>
    </location>
    <ligand>
        <name>ADP-alpha-D-glucose</name>
        <dbReference type="ChEBI" id="CHEBI:57498"/>
    </ligand>
</feature>
<feature type="sequence conflict" description="In Ref. 3; CAA58220." evidence="3" ref="3">
    <original>A</original>
    <variation>T</variation>
    <location>
        <position position="130"/>
    </location>
</feature>
<feature type="sequence conflict" description="In Ref. 3; CAA58220." evidence="3" ref="3">
    <original>I</original>
    <variation>V</variation>
    <location>
        <position position="398"/>
    </location>
</feature>
<evidence type="ECO:0000250" key="1"/>
<evidence type="ECO:0000256" key="2">
    <source>
        <dbReference type="SAM" id="MobiDB-lite"/>
    </source>
</evidence>
<evidence type="ECO:0000305" key="3"/>
<proteinExistence type="evidence at protein level"/>
<name>SSG1_SOLTU</name>
<sequence length="607" mass="66576">MASITASHHFVSRSQTSLDTKSTLSQIGLRNHTLTHNGLRAVNKLDGLQSRTNTKVTPKMASRTETKRPGCSATIVCGKGMNLIFVGTEVGPWSKTGGLGDVLGGLPPALAARGHRVMTISPRYDQYKDAWDTSVAVEVKVGDSIEIVRFFHCYKRGVDRVFVDHPMFLEKVWGKTGSKIYGPKAGLDYLDNELRFSLLCQAALEAPKVLNLNSSNYFSGPYGEDVLFIANDWHTALIPCYLKSMYQSRGIYLNAKVAFCIHNIAYQGRFSFSDFPLLNLPDEFRGSFDFIDGYEKPVKGRKINWMKAGILESHRVVTVSPYYAQELVSAVDKGVELDSVLRKTCITGIVNGMDTQEWNPATDKYTDVKYDITTVMDAKPLLKEALQAAVGLPVDKKIPLIGFIGRLEEQKGSDILVAAIHKFIGLDVQIVVLGTGKKEFEQEIEQLEVLYPNKAKGVAKFNVPLAHMITAGADFMLVPSRFEPCGLIQLHAMRYGTVPICASTGGLVDTVKEGYTGFHMGAFNVECDVVDPADVLKIVTTVARALAVYGTLAFAEMIKNCMSEELSWKEPAKKWETLLLGLGASGSEPGVEGEEIAPLAKENVATP</sequence>
<gene>
    <name type="primary">WAXY</name>
    <name type="synonym">GBSS</name>
</gene>
<organism>
    <name type="scientific">Solanum tuberosum</name>
    <name type="common">Potato</name>
    <dbReference type="NCBI Taxonomy" id="4113"/>
    <lineage>
        <taxon>Eukaryota</taxon>
        <taxon>Viridiplantae</taxon>
        <taxon>Streptophyta</taxon>
        <taxon>Embryophyta</taxon>
        <taxon>Tracheophyta</taxon>
        <taxon>Spermatophyta</taxon>
        <taxon>Magnoliopsida</taxon>
        <taxon>eudicotyledons</taxon>
        <taxon>Gunneridae</taxon>
        <taxon>Pentapetalae</taxon>
        <taxon>asterids</taxon>
        <taxon>lamiids</taxon>
        <taxon>Solanales</taxon>
        <taxon>Solanaceae</taxon>
        <taxon>Solanoideae</taxon>
        <taxon>Solaneae</taxon>
        <taxon>Solanum</taxon>
    </lineage>
</organism>
<reference key="1">
    <citation type="journal article" date="1991" name="Mol. Gen. Genet.">
        <title>Sequence of the structural gene for granule-bound starch synthase of potato (Solanum tuberosum L.) and evidence for a single point deletion in the amf allele.</title>
        <authorList>
            <person name="van der Leij F.R."/>
            <person name="Visser R.G.F."/>
            <person name="Ponstein A.S."/>
            <person name="Jacobsen E."/>
            <person name="Feenstra W.J."/>
        </authorList>
    </citation>
    <scope>NUCLEOTIDE SEQUENCE [GENOMIC DNA]</scope>
    <scope>PARTIAL PROTEIN SEQUENCE</scope>
    <source>
        <strain>cv. AM79.7322</strain>
    </source>
</reference>
<reference key="2">
    <citation type="submission" date="1992-06" db="EMBL/GenBank/DDBJ databases">
        <authorList>
            <person name="van der Leij F.R."/>
        </authorList>
    </citation>
    <scope>SEQUENCE REVISION</scope>
</reference>
<reference key="3">
    <citation type="submission" date="1994-12" db="EMBL/GenBank/DDBJ databases">
        <authorList>
            <person name="Dai W.L."/>
            <person name="Deng W."/>
            <person name="Cui M."/>
            <person name="Xiu M."/>
            <person name="Zhao S.Y."/>
            <person name="Wang X.M."/>
        </authorList>
    </citation>
    <scope>NUCLEOTIDE SEQUENCE [GENOMIC DNA]</scope>
    <source>
        <strain>cv. Dongnong 303</strain>
    </source>
</reference>
<reference key="4">
    <citation type="journal article" date="2011" name="Nature">
        <title>Genome sequence and analysis of the tuber crop potato.</title>
        <authorList>
            <consortium name="The Potato Genome Sequencing Consortium"/>
        </authorList>
    </citation>
    <scope>NUCLEOTIDE SEQUENCE [LARGE SCALE GENOMIC DNA]</scope>
    <source>
        <strain>cv. DM1-3 516 R44</strain>
    </source>
</reference>
<dbReference type="EC" id="2.4.1.242"/>
<dbReference type="EMBL" id="X58453">
    <property type="protein sequence ID" value="CAA41359.1"/>
    <property type="molecule type" value="Genomic_DNA"/>
</dbReference>
<dbReference type="EMBL" id="X83220">
    <property type="protein sequence ID" value="CAA58220.1"/>
    <property type="molecule type" value="Genomic_DNA"/>
</dbReference>
<dbReference type="PIR" id="S16555">
    <property type="entry name" value="YUPOY"/>
</dbReference>
<dbReference type="RefSeq" id="XP_006343763.1">
    <property type="nucleotide sequence ID" value="XM_006343701.2"/>
</dbReference>
<dbReference type="RefSeq" id="XP_015162572.1">
    <property type="nucleotide sequence ID" value="XM_015307086.1"/>
</dbReference>
<dbReference type="SMR" id="Q00775"/>
<dbReference type="FunCoup" id="Q00775">
    <property type="interactions" value="142"/>
</dbReference>
<dbReference type="STRING" id="4113.Q00775"/>
<dbReference type="CAZy" id="GT5">
    <property type="family name" value="Glycosyltransferase Family 5"/>
</dbReference>
<dbReference type="PaxDb" id="4113-PGSC0003DMT400031568"/>
<dbReference type="EnsemblPlants" id="PGSC0003DMT400031568">
    <property type="protein sequence ID" value="PGSC0003DMT400031568"/>
    <property type="gene ID" value="PGSC0003DMG400012111"/>
</dbReference>
<dbReference type="GeneID" id="102577459"/>
<dbReference type="Gramene" id="PGSC0003DMT400031568">
    <property type="protein sequence ID" value="PGSC0003DMT400031568"/>
    <property type="gene ID" value="PGSC0003DMG400012111"/>
</dbReference>
<dbReference type="eggNOG" id="ENOG502QQX3">
    <property type="taxonomic scope" value="Eukaryota"/>
</dbReference>
<dbReference type="InParanoid" id="Q00775"/>
<dbReference type="OMA" id="AHDWPAG"/>
<dbReference type="OrthoDB" id="512920at2759"/>
<dbReference type="BRENDA" id="2.4.1.242">
    <property type="organism ID" value="5757"/>
</dbReference>
<dbReference type="SABIO-RK" id="Q00775"/>
<dbReference type="UniPathway" id="UPA00152"/>
<dbReference type="Proteomes" id="UP000011115">
    <property type="component" value="Unassembled WGS sequence"/>
</dbReference>
<dbReference type="ExpressionAtlas" id="Q00775">
    <property type="expression patterns" value="baseline and differential"/>
</dbReference>
<dbReference type="GO" id="GO:0009501">
    <property type="term" value="C:amyloplast"/>
    <property type="evidence" value="ECO:0007669"/>
    <property type="project" value="UniProtKB-SubCell"/>
</dbReference>
<dbReference type="GO" id="GO:0009569">
    <property type="term" value="C:chloroplast starch grain"/>
    <property type="evidence" value="ECO:0007669"/>
    <property type="project" value="EnsemblPlants"/>
</dbReference>
<dbReference type="GO" id="GO:0004373">
    <property type="term" value="F:alpha-1,4-glucan glucosyltransferase (UDP-glucose donor) activity"/>
    <property type="evidence" value="ECO:0007669"/>
    <property type="project" value="InterPro"/>
</dbReference>
<dbReference type="GO" id="GO:0019252">
    <property type="term" value="P:starch biosynthetic process"/>
    <property type="evidence" value="ECO:0007669"/>
    <property type="project" value="UniProtKB-UniPathway"/>
</dbReference>
<dbReference type="CDD" id="cd03791">
    <property type="entry name" value="GT5_Glycogen_synthase_DULL1-like"/>
    <property type="match status" value="1"/>
</dbReference>
<dbReference type="FunFam" id="3.40.50.2000:FF:000073">
    <property type="entry name" value="Starch synthase, chloroplastic/amyloplastic"/>
    <property type="match status" value="1"/>
</dbReference>
<dbReference type="FunFam" id="3.40.50.2000:FF:000090">
    <property type="entry name" value="Starch synthase, chloroplastic/amyloplastic"/>
    <property type="match status" value="1"/>
</dbReference>
<dbReference type="Gene3D" id="3.40.50.2000">
    <property type="entry name" value="Glycogen Phosphorylase B"/>
    <property type="match status" value="2"/>
</dbReference>
<dbReference type="HAMAP" id="MF_00484">
    <property type="entry name" value="Glycogen_synth"/>
    <property type="match status" value="1"/>
</dbReference>
<dbReference type="InterPro" id="IPR001296">
    <property type="entry name" value="Glyco_trans_1"/>
</dbReference>
<dbReference type="InterPro" id="IPR011835">
    <property type="entry name" value="GS/SS"/>
</dbReference>
<dbReference type="InterPro" id="IPR013534">
    <property type="entry name" value="Starch_synth_cat_dom"/>
</dbReference>
<dbReference type="NCBIfam" id="TIGR02095">
    <property type="entry name" value="glgA"/>
    <property type="match status" value="1"/>
</dbReference>
<dbReference type="PANTHER" id="PTHR45825">
    <property type="entry name" value="GRANULE-BOUND STARCH SYNTHASE 1, CHLOROPLASTIC/AMYLOPLASTIC"/>
    <property type="match status" value="1"/>
</dbReference>
<dbReference type="PANTHER" id="PTHR45825:SF3">
    <property type="entry name" value="GRANULE-BOUND STARCH SYNTHASE 1, CHLOROPLASTIC_AMYLOPLASTIC"/>
    <property type="match status" value="1"/>
</dbReference>
<dbReference type="Pfam" id="PF08323">
    <property type="entry name" value="Glyco_transf_5"/>
    <property type="match status" value="1"/>
</dbReference>
<dbReference type="Pfam" id="PF00534">
    <property type="entry name" value="Glycos_transf_1"/>
    <property type="match status" value="1"/>
</dbReference>
<dbReference type="SUPFAM" id="SSF53756">
    <property type="entry name" value="UDP-Glycosyltransferase/glycogen phosphorylase"/>
    <property type="match status" value="1"/>
</dbReference>
<accession>Q00775</accession>
<accession>Q43176</accession>
<protein>
    <recommendedName>
        <fullName>Granule-bound starch synthase 1, chloroplastic/amyloplastic</fullName>
        <ecNumber>2.4.1.242</ecNumber>
    </recommendedName>
    <alternativeName>
        <fullName>Granule-bound starch synthase I</fullName>
        <shortName>GBSS-I</shortName>
    </alternativeName>
</protein>